<protein>
    <recommendedName>
        <fullName>Putative cysteine-rich repeat secretory protein 5</fullName>
    </recommendedName>
</protein>
<accession>Q9SH43</accession>
<name>CRRS5_ARATH</name>
<organism>
    <name type="scientific">Arabidopsis thaliana</name>
    <name type="common">Mouse-ear cress</name>
    <dbReference type="NCBI Taxonomy" id="3702"/>
    <lineage>
        <taxon>Eukaryota</taxon>
        <taxon>Viridiplantae</taxon>
        <taxon>Streptophyta</taxon>
        <taxon>Embryophyta</taxon>
        <taxon>Tracheophyta</taxon>
        <taxon>Spermatophyta</taxon>
        <taxon>Magnoliopsida</taxon>
        <taxon>eudicotyledons</taxon>
        <taxon>Gunneridae</taxon>
        <taxon>Pentapetalae</taxon>
        <taxon>rosids</taxon>
        <taxon>malvids</taxon>
        <taxon>Brassicales</taxon>
        <taxon>Brassicaceae</taxon>
        <taxon>Camelineae</taxon>
        <taxon>Arabidopsis</taxon>
    </lineage>
</organism>
<dbReference type="EMBL" id="AC008047">
    <property type="protein sequence ID" value="AAF19718.1"/>
    <property type="molecule type" value="Genomic_DNA"/>
</dbReference>
<dbReference type="EMBL" id="CP002684">
    <property type="protein sequence ID" value="AEE34116.1"/>
    <property type="molecule type" value="Genomic_DNA"/>
</dbReference>
<dbReference type="RefSeq" id="NP_176547.1">
    <property type="nucleotide sequence ID" value="NM_105037.1"/>
</dbReference>
<dbReference type="SMR" id="Q9SH43"/>
<dbReference type="iPTMnet" id="Q9SH43"/>
<dbReference type="PaxDb" id="3702-AT1G63590.1"/>
<dbReference type="EnsemblPlants" id="AT1G63590.1">
    <property type="protein sequence ID" value="AT1G63590.1"/>
    <property type="gene ID" value="AT1G63590"/>
</dbReference>
<dbReference type="GeneID" id="842664"/>
<dbReference type="Gramene" id="AT1G63590.1">
    <property type="protein sequence ID" value="AT1G63590.1"/>
    <property type="gene ID" value="AT1G63590"/>
</dbReference>
<dbReference type="KEGG" id="ath:AT1G63590"/>
<dbReference type="Araport" id="AT1G63590"/>
<dbReference type="TAIR" id="AT1G63590"/>
<dbReference type="HOGENOM" id="CLU_000288_35_0_1"/>
<dbReference type="InParanoid" id="Q9SH43"/>
<dbReference type="OMA" id="NECIVRY"/>
<dbReference type="PhylomeDB" id="Q9SH43"/>
<dbReference type="PRO" id="PR:Q9SH43"/>
<dbReference type="Proteomes" id="UP000006548">
    <property type="component" value="Chromosome 1"/>
</dbReference>
<dbReference type="ExpressionAtlas" id="Q9SH43">
    <property type="expression patterns" value="baseline and differential"/>
</dbReference>
<dbReference type="GO" id="GO:0005576">
    <property type="term" value="C:extracellular region"/>
    <property type="evidence" value="ECO:0007669"/>
    <property type="project" value="UniProtKB-SubCell"/>
</dbReference>
<dbReference type="CDD" id="cd23509">
    <property type="entry name" value="Gnk2-like"/>
    <property type="match status" value="2"/>
</dbReference>
<dbReference type="Gene3D" id="3.30.430.20">
    <property type="entry name" value="Gnk2 domain, C-X8-C-X2-C motif"/>
    <property type="match status" value="2"/>
</dbReference>
<dbReference type="InterPro" id="IPR002902">
    <property type="entry name" value="GNK2"/>
</dbReference>
<dbReference type="InterPro" id="IPR038408">
    <property type="entry name" value="GNK2_sf"/>
</dbReference>
<dbReference type="PANTHER" id="PTHR32099">
    <property type="entry name" value="CYSTEINE-RICH REPEAT SECRETORY PROTEIN"/>
    <property type="match status" value="1"/>
</dbReference>
<dbReference type="PANTHER" id="PTHR32099:SF46">
    <property type="entry name" value="CYSTEINE-RICH REPEAT SECRETORY PROTEIN 5-RELATED"/>
    <property type="match status" value="1"/>
</dbReference>
<dbReference type="Pfam" id="PF01657">
    <property type="entry name" value="Stress-antifung"/>
    <property type="match status" value="2"/>
</dbReference>
<dbReference type="PROSITE" id="PS51473">
    <property type="entry name" value="GNK2"/>
    <property type="match status" value="2"/>
</dbReference>
<proteinExistence type="inferred from homology"/>
<evidence type="ECO:0000255" key="1"/>
<evidence type="ECO:0000255" key="2">
    <source>
        <dbReference type="PROSITE-ProRule" id="PRU00806"/>
    </source>
</evidence>
<evidence type="ECO:0000305" key="3"/>
<sequence length="268" mass="29743">MTGINTHFAVALFCFFSFSLRAMSQASQMLIDCTQFDNVTRTSSYLSNRDTVLSTLRNRSSIGSYSNATAGLSPNTIYGMFLCRGDLNRTSCSDCVNATTLEIYKSCFYRKSALVISNECIVRYSNVSFFTLVEDVPSTARFSTGNSLDSPQFFSQTLLEKLDALILRASLSSSLPVPYFVDDQQHVTQLEGSYDLHAMVQCSPDLDPRNCTVCLRLAVQRLSGCCSHAQFARIFYTKCLITYEISALQPNVTSLGVTKSESLTVYII</sequence>
<reference key="1">
    <citation type="journal article" date="2000" name="Nature">
        <title>Sequence and analysis of chromosome 1 of the plant Arabidopsis thaliana.</title>
        <authorList>
            <person name="Theologis A."/>
            <person name="Ecker J.R."/>
            <person name="Palm C.J."/>
            <person name="Federspiel N.A."/>
            <person name="Kaul S."/>
            <person name="White O."/>
            <person name="Alonso J."/>
            <person name="Altafi H."/>
            <person name="Araujo R."/>
            <person name="Bowman C.L."/>
            <person name="Brooks S.Y."/>
            <person name="Buehler E."/>
            <person name="Chan A."/>
            <person name="Chao Q."/>
            <person name="Chen H."/>
            <person name="Cheuk R.F."/>
            <person name="Chin C.W."/>
            <person name="Chung M.K."/>
            <person name="Conn L."/>
            <person name="Conway A.B."/>
            <person name="Conway A.R."/>
            <person name="Creasy T.H."/>
            <person name="Dewar K."/>
            <person name="Dunn P."/>
            <person name="Etgu P."/>
            <person name="Feldblyum T.V."/>
            <person name="Feng J.-D."/>
            <person name="Fong B."/>
            <person name="Fujii C.Y."/>
            <person name="Gill J.E."/>
            <person name="Goldsmith A.D."/>
            <person name="Haas B."/>
            <person name="Hansen N.F."/>
            <person name="Hughes B."/>
            <person name="Huizar L."/>
            <person name="Hunter J.L."/>
            <person name="Jenkins J."/>
            <person name="Johnson-Hopson C."/>
            <person name="Khan S."/>
            <person name="Khaykin E."/>
            <person name="Kim C.J."/>
            <person name="Koo H.L."/>
            <person name="Kremenetskaia I."/>
            <person name="Kurtz D.B."/>
            <person name="Kwan A."/>
            <person name="Lam B."/>
            <person name="Langin-Hooper S."/>
            <person name="Lee A."/>
            <person name="Lee J.M."/>
            <person name="Lenz C.A."/>
            <person name="Li J.H."/>
            <person name="Li Y.-P."/>
            <person name="Lin X."/>
            <person name="Liu S.X."/>
            <person name="Liu Z.A."/>
            <person name="Luros J.S."/>
            <person name="Maiti R."/>
            <person name="Marziali A."/>
            <person name="Militscher J."/>
            <person name="Miranda M."/>
            <person name="Nguyen M."/>
            <person name="Nierman W.C."/>
            <person name="Osborne B.I."/>
            <person name="Pai G."/>
            <person name="Peterson J."/>
            <person name="Pham P.K."/>
            <person name="Rizzo M."/>
            <person name="Rooney T."/>
            <person name="Rowley D."/>
            <person name="Sakano H."/>
            <person name="Salzberg S.L."/>
            <person name="Schwartz J.R."/>
            <person name="Shinn P."/>
            <person name="Southwick A.M."/>
            <person name="Sun H."/>
            <person name="Tallon L.J."/>
            <person name="Tambunga G."/>
            <person name="Toriumi M.J."/>
            <person name="Town C.D."/>
            <person name="Utterback T."/>
            <person name="Van Aken S."/>
            <person name="Vaysberg M."/>
            <person name="Vysotskaia V.S."/>
            <person name="Walker M."/>
            <person name="Wu D."/>
            <person name="Yu G."/>
            <person name="Fraser C.M."/>
            <person name="Venter J.C."/>
            <person name="Davis R.W."/>
        </authorList>
    </citation>
    <scope>NUCLEOTIDE SEQUENCE [LARGE SCALE GENOMIC DNA]</scope>
    <source>
        <strain>cv. Columbia</strain>
    </source>
</reference>
<reference key="2">
    <citation type="journal article" date="2017" name="Plant J.">
        <title>Araport11: a complete reannotation of the Arabidopsis thaliana reference genome.</title>
        <authorList>
            <person name="Cheng C.Y."/>
            <person name="Krishnakumar V."/>
            <person name="Chan A.P."/>
            <person name="Thibaud-Nissen F."/>
            <person name="Schobel S."/>
            <person name="Town C.D."/>
        </authorList>
    </citation>
    <scope>GENOME REANNOTATION</scope>
    <source>
        <strain>cv. Columbia</strain>
    </source>
</reference>
<reference key="3">
    <citation type="journal article" date="2001" name="Plant Physiol.">
        <title>A superfamily of proteins with novel cysteine-rich repeats.</title>
        <authorList>
            <person name="Chen Z."/>
        </authorList>
    </citation>
    <scope>GENE FAMILY ORGANIZATION</scope>
    <scope>NOMENCLATURE</scope>
</reference>
<keyword id="KW-1185">Reference proteome</keyword>
<keyword id="KW-0677">Repeat</keyword>
<keyword id="KW-0964">Secreted</keyword>
<keyword id="KW-0732">Signal</keyword>
<comment type="subcellular location">
    <subcellularLocation>
        <location evidence="3">Secreted</location>
    </subcellularLocation>
</comment>
<comment type="similarity">
    <text evidence="3">Belongs to the cysteine-rich repeat secretory protein family.</text>
</comment>
<gene>
    <name type="primary">CRRSP5</name>
    <name type="ordered locus">At1g63590</name>
    <name type="ORF">F2K11.5</name>
</gene>
<feature type="signal peptide" evidence="1">
    <location>
        <begin position="1"/>
        <end position="24"/>
    </location>
</feature>
<feature type="chain" id="PRO_0000296133" description="Putative cysteine-rich repeat secretory protein 5">
    <location>
        <begin position="25"/>
        <end position="268"/>
    </location>
</feature>
<feature type="domain" description="Gnk2-homologous 1" evidence="2">
    <location>
        <begin position="27"/>
        <end position="129"/>
    </location>
</feature>
<feature type="domain" description="Gnk2-homologous 2" evidence="2">
    <location>
        <begin position="135"/>
        <end position="248"/>
    </location>
</feature>